<reference key="1">
    <citation type="journal article" date="2005" name="Science">
        <title>The transcriptional landscape of the mammalian genome.</title>
        <authorList>
            <person name="Carninci P."/>
            <person name="Kasukawa T."/>
            <person name="Katayama S."/>
            <person name="Gough J."/>
            <person name="Frith M.C."/>
            <person name="Maeda N."/>
            <person name="Oyama R."/>
            <person name="Ravasi T."/>
            <person name="Lenhard B."/>
            <person name="Wells C."/>
            <person name="Kodzius R."/>
            <person name="Shimokawa K."/>
            <person name="Bajic V.B."/>
            <person name="Brenner S.E."/>
            <person name="Batalov S."/>
            <person name="Forrest A.R."/>
            <person name="Zavolan M."/>
            <person name="Davis M.J."/>
            <person name="Wilming L.G."/>
            <person name="Aidinis V."/>
            <person name="Allen J.E."/>
            <person name="Ambesi-Impiombato A."/>
            <person name="Apweiler R."/>
            <person name="Aturaliya R.N."/>
            <person name="Bailey T.L."/>
            <person name="Bansal M."/>
            <person name="Baxter L."/>
            <person name="Beisel K.W."/>
            <person name="Bersano T."/>
            <person name="Bono H."/>
            <person name="Chalk A.M."/>
            <person name="Chiu K.P."/>
            <person name="Choudhary V."/>
            <person name="Christoffels A."/>
            <person name="Clutterbuck D.R."/>
            <person name="Crowe M.L."/>
            <person name="Dalla E."/>
            <person name="Dalrymple B.P."/>
            <person name="de Bono B."/>
            <person name="Della Gatta G."/>
            <person name="di Bernardo D."/>
            <person name="Down T."/>
            <person name="Engstrom P."/>
            <person name="Fagiolini M."/>
            <person name="Faulkner G."/>
            <person name="Fletcher C.F."/>
            <person name="Fukushima T."/>
            <person name="Furuno M."/>
            <person name="Futaki S."/>
            <person name="Gariboldi M."/>
            <person name="Georgii-Hemming P."/>
            <person name="Gingeras T.R."/>
            <person name="Gojobori T."/>
            <person name="Green R.E."/>
            <person name="Gustincich S."/>
            <person name="Harbers M."/>
            <person name="Hayashi Y."/>
            <person name="Hensch T.K."/>
            <person name="Hirokawa N."/>
            <person name="Hill D."/>
            <person name="Huminiecki L."/>
            <person name="Iacono M."/>
            <person name="Ikeo K."/>
            <person name="Iwama A."/>
            <person name="Ishikawa T."/>
            <person name="Jakt M."/>
            <person name="Kanapin A."/>
            <person name="Katoh M."/>
            <person name="Kawasawa Y."/>
            <person name="Kelso J."/>
            <person name="Kitamura H."/>
            <person name="Kitano H."/>
            <person name="Kollias G."/>
            <person name="Krishnan S.P."/>
            <person name="Kruger A."/>
            <person name="Kummerfeld S.K."/>
            <person name="Kurochkin I.V."/>
            <person name="Lareau L.F."/>
            <person name="Lazarevic D."/>
            <person name="Lipovich L."/>
            <person name="Liu J."/>
            <person name="Liuni S."/>
            <person name="McWilliam S."/>
            <person name="Madan Babu M."/>
            <person name="Madera M."/>
            <person name="Marchionni L."/>
            <person name="Matsuda H."/>
            <person name="Matsuzawa S."/>
            <person name="Miki H."/>
            <person name="Mignone F."/>
            <person name="Miyake S."/>
            <person name="Morris K."/>
            <person name="Mottagui-Tabar S."/>
            <person name="Mulder N."/>
            <person name="Nakano N."/>
            <person name="Nakauchi H."/>
            <person name="Ng P."/>
            <person name="Nilsson R."/>
            <person name="Nishiguchi S."/>
            <person name="Nishikawa S."/>
            <person name="Nori F."/>
            <person name="Ohara O."/>
            <person name="Okazaki Y."/>
            <person name="Orlando V."/>
            <person name="Pang K.C."/>
            <person name="Pavan W.J."/>
            <person name="Pavesi G."/>
            <person name="Pesole G."/>
            <person name="Petrovsky N."/>
            <person name="Piazza S."/>
            <person name="Reed J."/>
            <person name="Reid J.F."/>
            <person name="Ring B.Z."/>
            <person name="Ringwald M."/>
            <person name="Rost B."/>
            <person name="Ruan Y."/>
            <person name="Salzberg S.L."/>
            <person name="Sandelin A."/>
            <person name="Schneider C."/>
            <person name="Schoenbach C."/>
            <person name="Sekiguchi K."/>
            <person name="Semple C.A."/>
            <person name="Seno S."/>
            <person name="Sessa L."/>
            <person name="Sheng Y."/>
            <person name="Shibata Y."/>
            <person name="Shimada H."/>
            <person name="Shimada K."/>
            <person name="Silva D."/>
            <person name="Sinclair B."/>
            <person name="Sperling S."/>
            <person name="Stupka E."/>
            <person name="Sugiura K."/>
            <person name="Sultana R."/>
            <person name="Takenaka Y."/>
            <person name="Taki K."/>
            <person name="Tammoja K."/>
            <person name="Tan S.L."/>
            <person name="Tang S."/>
            <person name="Taylor M.S."/>
            <person name="Tegner J."/>
            <person name="Teichmann S.A."/>
            <person name="Ueda H.R."/>
            <person name="van Nimwegen E."/>
            <person name="Verardo R."/>
            <person name="Wei C.L."/>
            <person name="Yagi K."/>
            <person name="Yamanishi H."/>
            <person name="Zabarovsky E."/>
            <person name="Zhu S."/>
            <person name="Zimmer A."/>
            <person name="Hide W."/>
            <person name="Bult C."/>
            <person name="Grimmond S.M."/>
            <person name="Teasdale R.D."/>
            <person name="Liu E.T."/>
            <person name="Brusic V."/>
            <person name="Quackenbush J."/>
            <person name="Wahlestedt C."/>
            <person name="Mattick J.S."/>
            <person name="Hume D.A."/>
            <person name="Kai C."/>
            <person name="Sasaki D."/>
            <person name="Tomaru Y."/>
            <person name="Fukuda S."/>
            <person name="Kanamori-Katayama M."/>
            <person name="Suzuki M."/>
            <person name="Aoki J."/>
            <person name="Arakawa T."/>
            <person name="Iida J."/>
            <person name="Imamura K."/>
            <person name="Itoh M."/>
            <person name="Kato T."/>
            <person name="Kawaji H."/>
            <person name="Kawagashira N."/>
            <person name="Kawashima T."/>
            <person name="Kojima M."/>
            <person name="Kondo S."/>
            <person name="Konno H."/>
            <person name="Nakano K."/>
            <person name="Ninomiya N."/>
            <person name="Nishio T."/>
            <person name="Okada M."/>
            <person name="Plessy C."/>
            <person name="Shibata K."/>
            <person name="Shiraki T."/>
            <person name="Suzuki S."/>
            <person name="Tagami M."/>
            <person name="Waki K."/>
            <person name="Watahiki A."/>
            <person name="Okamura-Oho Y."/>
            <person name="Suzuki H."/>
            <person name="Kawai J."/>
            <person name="Hayashizaki Y."/>
        </authorList>
    </citation>
    <scope>NUCLEOTIDE SEQUENCE [LARGE SCALE MRNA]</scope>
    <source>
        <strain>C57BL/6J</strain>
        <tissue>Testis</tissue>
    </source>
</reference>
<feature type="chain" id="PRO_0000271363" description="Uncharacterized protein C6orf163 homolog">
    <location>
        <begin position="1"/>
        <end position="328"/>
    </location>
</feature>
<feature type="coiled-coil region" evidence="1">
    <location>
        <begin position="67"/>
        <end position="190"/>
    </location>
</feature>
<feature type="coiled-coil region" evidence="1">
    <location>
        <begin position="223"/>
        <end position="251"/>
    </location>
</feature>
<accession>Q3V037</accession>
<proteinExistence type="evidence at transcript level"/>
<gene>
    <name type="primary">Gm136</name>
</gene>
<dbReference type="EMBL" id="AK133458">
    <property type="protein sequence ID" value="BAE21668.1"/>
    <property type="molecule type" value="mRNA"/>
</dbReference>
<dbReference type="CCDS" id="CCDS18032.1"/>
<dbReference type="RefSeq" id="NP_001028427.1">
    <property type="nucleotide sequence ID" value="NM_001033255.2"/>
</dbReference>
<dbReference type="SMR" id="Q3V037"/>
<dbReference type="BioGRID" id="229539">
    <property type="interactions" value="1"/>
</dbReference>
<dbReference type="STRING" id="10090.ENSMUSP00000092748"/>
<dbReference type="iPTMnet" id="Q3V037"/>
<dbReference type="PhosphoSitePlus" id="Q3V037"/>
<dbReference type="PaxDb" id="10090-ENSMUSP00000092748"/>
<dbReference type="ProteomicsDB" id="281200"/>
<dbReference type="Antibodypedia" id="51525">
    <property type="antibodies" value="64 antibodies from 10 providers"/>
</dbReference>
<dbReference type="Ensembl" id="ENSMUST00000095129.3">
    <property type="protein sequence ID" value="ENSMUSP00000092748.3"/>
    <property type="gene ID" value="ENSMUSG00000071015.3"/>
</dbReference>
<dbReference type="GeneID" id="214568"/>
<dbReference type="KEGG" id="mmu:214568"/>
<dbReference type="UCSC" id="uc008sgk.1">
    <property type="organism name" value="mouse"/>
</dbReference>
<dbReference type="AGR" id="MGI:2684982"/>
<dbReference type="MGI" id="MGI:2684982">
    <property type="gene designation" value="Gm136"/>
</dbReference>
<dbReference type="VEuPathDB" id="HostDB:ENSMUSG00000071015"/>
<dbReference type="eggNOG" id="ENOG502RDFA">
    <property type="taxonomic scope" value="Eukaryota"/>
</dbReference>
<dbReference type="GeneTree" id="ENSGT00390000010837"/>
<dbReference type="HOGENOM" id="CLU_836681_0_0_1"/>
<dbReference type="InParanoid" id="Q3V037"/>
<dbReference type="OMA" id="NYTNFVC"/>
<dbReference type="OrthoDB" id="8774892at2759"/>
<dbReference type="PhylomeDB" id="Q3V037"/>
<dbReference type="TreeFam" id="TF335705"/>
<dbReference type="BioGRID-ORCS" id="214568">
    <property type="hits" value="2 hits in 73 CRISPR screens"/>
</dbReference>
<dbReference type="PRO" id="PR:Q3V037"/>
<dbReference type="Proteomes" id="UP000000589">
    <property type="component" value="Chromosome 4"/>
</dbReference>
<dbReference type="RNAct" id="Q3V037">
    <property type="molecule type" value="protein"/>
</dbReference>
<dbReference type="Bgee" id="ENSMUSG00000071015">
    <property type="expression patterns" value="Expressed in spermatid and 6 other cell types or tissues"/>
</dbReference>
<dbReference type="ExpressionAtlas" id="Q3V037">
    <property type="expression patterns" value="baseline and differential"/>
</dbReference>
<dbReference type="InterPro" id="IPR038927">
    <property type="entry name" value="C6orf163"/>
</dbReference>
<dbReference type="PANTHER" id="PTHR34645:SF1">
    <property type="entry name" value="GENE 136-RELATED"/>
    <property type="match status" value="1"/>
</dbReference>
<dbReference type="PANTHER" id="PTHR34645">
    <property type="entry name" value="SIMILAR TO HYPOTHETICAL PROTEIN"/>
    <property type="match status" value="1"/>
</dbReference>
<organism>
    <name type="scientific">Mus musculus</name>
    <name type="common">Mouse</name>
    <dbReference type="NCBI Taxonomy" id="10090"/>
    <lineage>
        <taxon>Eukaryota</taxon>
        <taxon>Metazoa</taxon>
        <taxon>Chordata</taxon>
        <taxon>Craniata</taxon>
        <taxon>Vertebrata</taxon>
        <taxon>Euteleostomi</taxon>
        <taxon>Mammalia</taxon>
        <taxon>Eutheria</taxon>
        <taxon>Euarchontoglires</taxon>
        <taxon>Glires</taxon>
        <taxon>Rodentia</taxon>
        <taxon>Myomorpha</taxon>
        <taxon>Muroidea</taxon>
        <taxon>Muridae</taxon>
        <taxon>Murinae</taxon>
        <taxon>Mus</taxon>
        <taxon>Mus</taxon>
    </lineage>
</organism>
<sequence>MIRNPNYTDFVCCAVCNKIIPPAPFGETFKRIYDYKPFKTRFYTHKDILDIGASILNKEEEFRETVFKEQIKKAEAKVWEKAELLQKQAVDQAVEDAEARHKFEIRVLEEQHQKDLKALEDKTKVNMIQQMKEELNREHTAAEQRMVHRIQRIMMECHQEKMEAVKKAREEERRIAQKAIEEEKSKVLEEFVTTGVTVIKDKKTSLGQLIKAKEHEMTIYYGMAQRQKQEEVQEVLQEAEKTHQATLDNMMGKLVNTQGELLSVAKQLGIMTNWKDFLEEELQETRAAFQKYINYTFPRLSPGHADFILPERKKTPSILAKENEPRTD</sequence>
<keyword id="KW-0175">Coiled coil</keyword>
<keyword id="KW-1185">Reference proteome</keyword>
<evidence type="ECO:0000255" key="1"/>
<name>CF163_MOUSE</name>
<protein>
    <recommendedName>
        <fullName>Uncharacterized protein C6orf163 homolog</fullName>
    </recommendedName>
</protein>